<name>Y219_HAEIN</name>
<protein>
    <recommendedName>
        <fullName>Uncharacterized protein HI_0219</fullName>
    </recommendedName>
</protein>
<evidence type="ECO:0000255" key="1"/>
<evidence type="ECO:0000305" key="2"/>
<reference key="1">
    <citation type="journal article" date="1995" name="Science">
        <title>Whole-genome random sequencing and assembly of Haemophilus influenzae Rd.</title>
        <authorList>
            <person name="Fleischmann R.D."/>
            <person name="Adams M.D."/>
            <person name="White O."/>
            <person name="Clayton R.A."/>
            <person name="Kirkness E.F."/>
            <person name="Kerlavage A.R."/>
            <person name="Bult C.J."/>
            <person name="Tomb J.-F."/>
            <person name="Dougherty B.A."/>
            <person name="Merrick J.M."/>
            <person name="McKenney K."/>
            <person name="Sutton G.G."/>
            <person name="FitzHugh W."/>
            <person name="Fields C.A."/>
            <person name="Gocayne J.D."/>
            <person name="Scott J.D."/>
            <person name="Shirley R."/>
            <person name="Liu L.-I."/>
            <person name="Glodek A."/>
            <person name="Kelley J.M."/>
            <person name="Weidman J.F."/>
            <person name="Phillips C.A."/>
            <person name="Spriggs T."/>
            <person name="Hedblom E."/>
            <person name="Cotton M.D."/>
            <person name="Utterback T.R."/>
            <person name="Hanna M.C."/>
            <person name="Nguyen D.T."/>
            <person name="Saudek D.M."/>
            <person name="Brandon R.C."/>
            <person name="Fine L.D."/>
            <person name="Fritchman J.L."/>
            <person name="Fuhrmann J.L."/>
            <person name="Geoghagen N.S.M."/>
            <person name="Gnehm C.L."/>
            <person name="McDonald L.A."/>
            <person name="Small K.V."/>
            <person name="Fraser C.M."/>
            <person name="Smith H.O."/>
            <person name="Venter J.C."/>
        </authorList>
    </citation>
    <scope>NUCLEOTIDE SEQUENCE [LARGE SCALE GENOMIC DNA]</scope>
    <source>
        <strain>ATCC 51907 / DSM 11121 / KW20 / Rd</strain>
    </source>
</reference>
<dbReference type="EMBL" id="L42023">
    <property type="protein sequence ID" value="AAC21887.1"/>
    <property type="molecule type" value="Genomic_DNA"/>
</dbReference>
<dbReference type="PIR" id="E64145">
    <property type="entry name" value="E64145"/>
</dbReference>
<dbReference type="RefSeq" id="NP_438387.2">
    <property type="nucleotide sequence ID" value="NC_000907.1"/>
</dbReference>
<dbReference type="EnsemblBacteria" id="AAC21887">
    <property type="protein sequence ID" value="AAC21887"/>
    <property type="gene ID" value="HI_0219"/>
</dbReference>
<dbReference type="KEGG" id="hin:HI_0219"/>
<dbReference type="PATRIC" id="fig|71421.8.peg.228"/>
<dbReference type="eggNOG" id="COG3059">
    <property type="taxonomic scope" value="Bacteria"/>
</dbReference>
<dbReference type="HOGENOM" id="CLU_102847_0_0_6"/>
<dbReference type="OrthoDB" id="1118972at2"/>
<dbReference type="PhylomeDB" id="P44577"/>
<dbReference type="Proteomes" id="UP000000579">
    <property type="component" value="Chromosome"/>
</dbReference>
<dbReference type="GO" id="GO:0005886">
    <property type="term" value="C:plasma membrane"/>
    <property type="evidence" value="ECO:0000318"/>
    <property type="project" value="GO_Central"/>
</dbReference>
<dbReference type="GO" id="GO:1901530">
    <property type="term" value="P:response to hypochlorite"/>
    <property type="evidence" value="ECO:0000318"/>
    <property type="project" value="GO_Central"/>
</dbReference>
<dbReference type="InterPro" id="IPR007339">
    <property type="entry name" value="RclC-like"/>
</dbReference>
<dbReference type="PANTHER" id="PTHR40106">
    <property type="entry name" value="INNER MEMBRANE PROTEIN RCLC"/>
    <property type="match status" value="1"/>
</dbReference>
<dbReference type="PANTHER" id="PTHR40106:SF1">
    <property type="entry name" value="INNER MEMBRANE PROTEIN RCLC"/>
    <property type="match status" value="1"/>
</dbReference>
<dbReference type="Pfam" id="PF04224">
    <property type="entry name" value="DUF417"/>
    <property type="match status" value="1"/>
</dbReference>
<feature type="chain" id="PRO_0000168567" description="Uncharacterized protein HI_0219">
    <location>
        <begin position="1"/>
        <end position="213"/>
    </location>
</feature>
<feature type="transmembrane region" description="Helical" evidence="1">
    <location>
        <begin position="26"/>
        <end position="46"/>
    </location>
</feature>
<feature type="transmembrane region" description="Helical" evidence="1">
    <location>
        <begin position="112"/>
        <end position="132"/>
    </location>
</feature>
<feature type="transmembrane region" description="Helical" evidence="1">
    <location>
        <begin position="136"/>
        <end position="156"/>
    </location>
</feature>
<gene>
    <name type="ordered locus">HI_0219</name>
</gene>
<accession>P44577</accession>
<organism>
    <name type="scientific">Haemophilus influenzae (strain ATCC 51907 / DSM 11121 / KW20 / Rd)</name>
    <dbReference type="NCBI Taxonomy" id="71421"/>
    <lineage>
        <taxon>Bacteria</taxon>
        <taxon>Pseudomonadati</taxon>
        <taxon>Pseudomonadota</taxon>
        <taxon>Gammaproteobacteria</taxon>
        <taxon>Pasteurellales</taxon>
        <taxon>Pasteurellaceae</taxon>
        <taxon>Haemophilus</taxon>
    </lineage>
</organism>
<keyword id="KW-1003">Cell membrane</keyword>
<keyword id="KW-0472">Membrane</keyword>
<keyword id="KW-1185">Reference proteome</keyword>
<keyword id="KW-0812">Transmembrane</keyword>
<keyword id="KW-1133">Transmembrane helix</keyword>
<sequence length="213" mass="23338">MEIYMSVFNTFVEFVARIVAPMQRQFINFIRIAIFIVMAWIGGLKVCQYEADGIAHFVSNSPFFSYMYEKGPNLVPNDKGELVMEYTLHKNPEGKMVAKNIEWHKENGTYTASYIIGAIIVTVGILTLAGIWNATAGLAGGLLTFGMSIVTLSFLITTPEAWVPNLGGDLPTPAYGFPYLSGVGRLVIKDIIMMAGGLTAAAECANRILARKK</sequence>
<proteinExistence type="predicted"/>
<comment type="subcellular location">
    <subcellularLocation>
        <location evidence="2">Cell membrane</location>
        <topology evidence="2">Multi-pass membrane protein</topology>
    </subcellularLocation>
</comment>